<comment type="function">
    <text evidence="1">Catalyzes the conversion of (8S)-3',8-cyclo-7,8-dihydroguanosine 5'-triphosphate to cyclic pyranopterin monophosphate (cPMP).</text>
</comment>
<comment type="catalytic activity">
    <reaction evidence="1">
        <text>(8S)-3',8-cyclo-7,8-dihydroguanosine 5'-triphosphate = cyclic pyranopterin phosphate + diphosphate</text>
        <dbReference type="Rhea" id="RHEA:49580"/>
        <dbReference type="ChEBI" id="CHEBI:33019"/>
        <dbReference type="ChEBI" id="CHEBI:59648"/>
        <dbReference type="ChEBI" id="CHEBI:131766"/>
        <dbReference type="EC" id="4.6.1.17"/>
    </reaction>
</comment>
<comment type="pathway">
    <text evidence="1">Cofactor biosynthesis; molybdopterin biosynthesis.</text>
</comment>
<comment type="subunit">
    <text evidence="1">Homohexamer; trimer of dimers.</text>
</comment>
<comment type="similarity">
    <text evidence="1">Belongs to the MoaC family.</text>
</comment>
<reference key="1">
    <citation type="submission" date="2007-10" db="EMBL/GenBank/DDBJ databases">
        <title>Complete sequence of chromosome 1 of Burkholderia multivorans ATCC 17616.</title>
        <authorList>
            <person name="Copeland A."/>
            <person name="Lucas S."/>
            <person name="Lapidus A."/>
            <person name="Barry K."/>
            <person name="Glavina del Rio T."/>
            <person name="Dalin E."/>
            <person name="Tice H."/>
            <person name="Pitluck S."/>
            <person name="Chain P."/>
            <person name="Malfatti S."/>
            <person name="Shin M."/>
            <person name="Vergez L."/>
            <person name="Schmutz J."/>
            <person name="Larimer F."/>
            <person name="Land M."/>
            <person name="Hauser L."/>
            <person name="Kyrpides N."/>
            <person name="Kim E."/>
            <person name="Tiedje J."/>
            <person name="Richardson P."/>
        </authorList>
    </citation>
    <scope>NUCLEOTIDE SEQUENCE [LARGE SCALE GENOMIC DNA]</scope>
    <source>
        <strain>ATCC 17616 / 249</strain>
    </source>
</reference>
<reference key="2">
    <citation type="submission" date="2007-04" db="EMBL/GenBank/DDBJ databases">
        <title>Complete genome sequence of Burkholderia multivorans ATCC 17616.</title>
        <authorList>
            <person name="Ohtsubo Y."/>
            <person name="Yamashita A."/>
            <person name="Kurokawa K."/>
            <person name="Takami H."/>
            <person name="Yuhara S."/>
            <person name="Nishiyama E."/>
            <person name="Endo R."/>
            <person name="Miyazaki R."/>
            <person name="Ono A."/>
            <person name="Yano K."/>
            <person name="Ito M."/>
            <person name="Sota M."/>
            <person name="Yuji N."/>
            <person name="Hattori M."/>
            <person name="Tsuda M."/>
        </authorList>
    </citation>
    <scope>NUCLEOTIDE SEQUENCE [LARGE SCALE GENOMIC DNA]</scope>
    <source>
        <strain>ATCC 17616 / 249</strain>
    </source>
</reference>
<protein>
    <recommendedName>
        <fullName evidence="1">Cyclic pyranopterin monophosphate synthase</fullName>
        <ecNumber evidence="1">4.6.1.17</ecNumber>
    </recommendedName>
    <alternativeName>
        <fullName evidence="1">Molybdenum cofactor biosynthesis protein C</fullName>
    </alternativeName>
</protein>
<gene>
    <name evidence="1" type="primary">moaC</name>
    <name type="ordered locus">Bmul_0660</name>
    <name type="ordered locus">BMULJ_02600</name>
</gene>
<feature type="chain" id="PRO_1000139253" description="Cyclic pyranopterin monophosphate synthase">
    <location>
        <begin position="1"/>
        <end position="159"/>
    </location>
</feature>
<feature type="active site" evidence="1">
    <location>
        <position position="128"/>
    </location>
</feature>
<feature type="binding site" evidence="1">
    <location>
        <begin position="75"/>
        <end position="77"/>
    </location>
    <ligand>
        <name>substrate</name>
    </ligand>
</feature>
<feature type="binding site" evidence="1">
    <location>
        <begin position="113"/>
        <end position="114"/>
    </location>
    <ligand>
        <name>substrate</name>
    </ligand>
</feature>
<accession>A9AFU0</accession>
<sequence>MSGLTHFDAAGHAHMVDVGGKQETQRIAVARGTIRMLPATFELIRDGKAKKGDVLGVARIAAIQGAKRTADLIPLCHPLALTRVAVDFELDDALPGVHCIAQVETFGRTGVEMEALTAVQVGLLTVYDMCKAVDRGMVIGDVSVTEKRGGKSGDWKAQA</sequence>
<name>MOAC_BURM1</name>
<organism>
    <name type="scientific">Burkholderia multivorans (strain ATCC 17616 / 249)</name>
    <dbReference type="NCBI Taxonomy" id="395019"/>
    <lineage>
        <taxon>Bacteria</taxon>
        <taxon>Pseudomonadati</taxon>
        <taxon>Pseudomonadota</taxon>
        <taxon>Betaproteobacteria</taxon>
        <taxon>Burkholderiales</taxon>
        <taxon>Burkholderiaceae</taxon>
        <taxon>Burkholderia</taxon>
        <taxon>Burkholderia cepacia complex</taxon>
    </lineage>
</organism>
<evidence type="ECO:0000255" key="1">
    <source>
        <dbReference type="HAMAP-Rule" id="MF_01224"/>
    </source>
</evidence>
<proteinExistence type="inferred from homology"/>
<dbReference type="EC" id="4.6.1.17" evidence="1"/>
<dbReference type="EMBL" id="CP000868">
    <property type="protein sequence ID" value="ABX14355.1"/>
    <property type="molecule type" value="Genomic_DNA"/>
</dbReference>
<dbReference type="EMBL" id="AP009385">
    <property type="protein sequence ID" value="BAG44491.1"/>
    <property type="molecule type" value="Genomic_DNA"/>
</dbReference>
<dbReference type="RefSeq" id="WP_006406501.1">
    <property type="nucleotide sequence ID" value="NC_010084.1"/>
</dbReference>
<dbReference type="SMR" id="A9AFU0"/>
<dbReference type="STRING" id="395019.BMULJ_02600"/>
<dbReference type="KEGG" id="bmj:BMULJ_02600"/>
<dbReference type="KEGG" id="bmu:Bmul_0660"/>
<dbReference type="eggNOG" id="COG0315">
    <property type="taxonomic scope" value="Bacteria"/>
</dbReference>
<dbReference type="HOGENOM" id="CLU_074693_1_1_4"/>
<dbReference type="UniPathway" id="UPA00344"/>
<dbReference type="Proteomes" id="UP000008815">
    <property type="component" value="Chromosome 1"/>
</dbReference>
<dbReference type="GO" id="GO:0061799">
    <property type="term" value="F:cyclic pyranopterin monophosphate synthase activity"/>
    <property type="evidence" value="ECO:0007669"/>
    <property type="project" value="UniProtKB-UniRule"/>
</dbReference>
<dbReference type="GO" id="GO:0006777">
    <property type="term" value="P:Mo-molybdopterin cofactor biosynthetic process"/>
    <property type="evidence" value="ECO:0007669"/>
    <property type="project" value="UniProtKB-UniRule"/>
</dbReference>
<dbReference type="CDD" id="cd01420">
    <property type="entry name" value="MoaC_PE"/>
    <property type="match status" value="1"/>
</dbReference>
<dbReference type="Gene3D" id="3.30.70.640">
    <property type="entry name" value="Molybdopterin cofactor biosynthesis C (MoaC) domain"/>
    <property type="match status" value="1"/>
</dbReference>
<dbReference type="HAMAP" id="MF_01224_B">
    <property type="entry name" value="MoaC_B"/>
    <property type="match status" value="1"/>
</dbReference>
<dbReference type="InterPro" id="IPR023045">
    <property type="entry name" value="MoaC"/>
</dbReference>
<dbReference type="InterPro" id="IPR047594">
    <property type="entry name" value="MoaC_bact/euk"/>
</dbReference>
<dbReference type="InterPro" id="IPR036522">
    <property type="entry name" value="MoaC_sf"/>
</dbReference>
<dbReference type="InterPro" id="IPR050105">
    <property type="entry name" value="MoCo_biosynth_MoaA/MoaC"/>
</dbReference>
<dbReference type="InterPro" id="IPR002820">
    <property type="entry name" value="Mopterin_CF_biosynth-C_dom"/>
</dbReference>
<dbReference type="NCBIfam" id="TIGR00581">
    <property type="entry name" value="moaC"/>
    <property type="match status" value="1"/>
</dbReference>
<dbReference type="NCBIfam" id="NF006870">
    <property type="entry name" value="PRK09364.1"/>
    <property type="match status" value="1"/>
</dbReference>
<dbReference type="PANTHER" id="PTHR22960:SF29">
    <property type="entry name" value="CYCLIC PYRANOPTERIN MONOPHOSPHATE SYNTHASE"/>
    <property type="match status" value="1"/>
</dbReference>
<dbReference type="PANTHER" id="PTHR22960">
    <property type="entry name" value="MOLYBDOPTERIN COFACTOR SYNTHESIS PROTEIN A"/>
    <property type="match status" value="1"/>
</dbReference>
<dbReference type="Pfam" id="PF01967">
    <property type="entry name" value="MoaC"/>
    <property type="match status" value="1"/>
</dbReference>
<dbReference type="SUPFAM" id="SSF55040">
    <property type="entry name" value="Molybdenum cofactor biosynthesis protein C, MoaC"/>
    <property type="match status" value="1"/>
</dbReference>
<keyword id="KW-0456">Lyase</keyword>
<keyword id="KW-0501">Molybdenum cofactor biosynthesis</keyword>
<keyword id="KW-1185">Reference proteome</keyword>